<comment type="similarity">
    <text evidence="1">Belongs to the bacterial ribosomal protein bL35 family.</text>
</comment>
<organism>
    <name type="scientific">Anaeromyxobacter sp. (strain K)</name>
    <dbReference type="NCBI Taxonomy" id="447217"/>
    <lineage>
        <taxon>Bacteria</taxon>
        <taxon>Pseudomonadati</taxon>
        <taxon>Myxococcota</taxon>
        <taxon>Myxococcia</taxon>
        <taxon>Myxococcales</taxon>
        <taxon>Cystobacterineae</taxon>
        <taxon>Anaeromyxobacteraceae</taxon>
        <taxon>Anaeromyxobacter</taxon>
    </lineage>
</organism>
<sequence>MPKLKTKSGAKKRFVPKKSGKVKFRRAGVRHLATFGKTKKQKRHLRGTDHLTPMDEKKIKECFPYAR</sequence>
<name>RL35_ANASK</name>
<gene>
    <name evidence="1" type="primary">rpmI</name>
    <name type="ordered locus">AnaeK_1904</name>
</gene>
<proteinExistence type="inferred from homology"/>
<evidence type="ECO:0000255" key="1">
    <source>
        <dbReference type="HAMAP-Rule" id="MF_00514"/>
    </source>
</evidence>
<evidence type="ECO:0000256" key="2">
    <source>
        <dbReference type="SAM" id="MobiDB-lite"/>
    </source>
</evidence>
<evidence type="ECO:0000305" key="3"/>
<reference key="1">
    <citation type="submission" date="2008-08" db="EMBL/GenBank/DDBJ databases">
        <title>Complete sequence of Anaeromyxobacter sp. K.</title>
        <authorList>
            <consortium name="US DOE Joint Genome Institute"/>
            <person name="Lucas S."/>
            <person name="Copeland A."/>
            <person name="Lapidus A."/>
            <person name="Glavina del Rio T."/>
            <person name="Dalin E."/>
            <person name="Tice H."/>
            <person name="Bruce D."/>
            <person name="Goodwin L."/>
            <person name="Pitluck S."/>
            <person name="Saunders E."/>
            <person name="Brettin T."/>
            <person name="Detter J.C."/>
            <person name="Han C."/>
            <person name="Larimer F."/>
            <person name="Land M."/>
            <person name="Hauser L."/>
            <person name="Kyrpides N."/>
            <person name="Ovchinnikiva G."/>
            <person name="Beliaev A."/>
        </authorList>
    </citation>
    <scope>NUCLEOTIDE SEQUENCE [LARGE SCALE GENOMIC DNA]</scope>
    <source>
        <strain>K</strain>
    </source>
</reference>
<accession>B4UAN6</accession>
<keyword id="KW-0687">Ribonucleoprotein</keyword>
<keyword id="KW-0689">Ribosomal protein</keyword>
<feature type="chain" id="PRO_1000127302" description="Large ribosomal subunit protein bL35">
    <location>
        <begin position="1"/>
        <end position="67"/>
    </location>
</feature>
<feature type="region of interest" description="Disordered" evidence="2">
    <location>
        <begin position="1"/>
        <end position="20"/>
    </location>
</feature>
<protein>
    <recommendedName>
        <fullName evidence="1">Large ribosomal subunit protein bL35</fullName>
    </recommendedName>
    <alternativeName>
        <fullName evidence="3">50S ribosomal protein L35</fullName>
    </alternativeName>
</protein>
<dbReference type="EMBL" id="CP001131">
    <property type="protein sequence ID" value="ACG73132.1"/>
    <property type="molecule type" value="Genomic_DNA"/>
</dbReference>
<dbReference type="RefSeq" id="WP_012525946.1">
    <property type="nucleotide sequence ID" value="NC_011145.1"/>
</dbReference>
<dbReference type="SMR" id="B4UAN6"/>
<dbReference type="KEGG" id="ank:AnaeK_1904"/>
<dbReference type="HOGENOM" id="CLU_169643_2_1_7"/>
<dbReference type="OrthoDB" id="9804851at2"/>
<dbReference type="Proteomes" id="UP000001871">
    <property type="component" value="Chromosome"/>
</dbReference>
<dbReference type="GO" id="GO:0022625">
    <property type="term" value="C:cytosolic large ribosomal subunit"/>
    <property type="evidence" value="ECO:0007669"/>
    <property type="project" value="TreeGrafter"/>
</dbReference>
<dbReference type="GO" id="GO:0003735">
    <property type="term" value="F:structural constituent of ribosome"/>
    <property type="evidence" value="ECO:0007669"/>
    <property type="project" value="InterPro"/>
</dbReference>
<dbReference type="GO" id="GO:0006412">
    <property type="term" value="P:translation"/>
    <property type="evidence" value="ECO:0007669"/>
    <property type="project" value="UniProtKB-UniRule"/>
</dbReference>
<dbReference type="FunFam" id="4.10.410.60:FF:000001">
    <property type="entry name" value="50S ribosomal protein L35"/>
    <property type="match status" value="1"/>
</dbReference>
<dbReference type="Gene3D" id="4.10.410.60">
    <property type="match status" value="1"/>
</dbReference>
<dbReference type="HAMAP" id="MF_00514">
    <property type="entry name" value="Ribosomal_bL35"/>
    <property type="match status" value="1"/>
</dbReference>
<dbReference type="InterPro" id="IPR001706">
    <property type="entry name" value="Ribosomal_bL35"/>
</dbReference>
<dbReference type="InterPro" id="IPR021137">
    <property type="entry name" value="Ribosomal_bL35-like"/>
</dbReference>
<dbReference type="InterPro" id="IPR018265">
    <property type="entry name" value="Ribosomal_bL35_CS"/>
</dbReference>
<dbReference type="InterPro" id="IPR037229">
    <property type="entry name" value="Ribosomal_bL35_sf"/>
</dbReference>
<dbReference type="NCBIfam" id="TIGR00001">
    <property type="entry name" value="rpmI_bact"/>
    <property type="match status" value="1"/>
</dbReference>
<dbReference type="PANTHER" id="PTHR33343">
    <property type="entry name" value="54S RIBOSOMAL PROTEIN BL35M"/>
    <property type="match status" value="1"/>
</dbReference>
<dbReference type="PANTHER" id="PTHR33343:SF1">
    <property type="entry name" value="LARGE RIBOSOMAL SUBUNIT PROTEIN BL35M"/>
    <property type="match status" value="1"/>
</dbReference>
<dbReference type="Pfam" id="PF01632">
    <property type="entry name" value="Ribosomal_L35p"/>
    <property type="match status" value="1"/>
</dbReference>
<dbReference type="PRINTS" id="PR00064">
    <property type="entry name" value="RIBOSOMALL35"/>
</dbReference>
<dbReference type="SUPFAM" id="SSF143034">
    <property type="entry name" value="L35p-like"/>
    <property type="match status" value="1"/>
</dbReference>
<dbReference type="PROSITE" id="PS00936">
    <property type="entry name" value="RIBOSOMAL_L35"/>
    <property type="match status" value="1"/>
</dbReference>